<sequence length="656" mass="70838">MAEIIGIDLGTTNSCVAVMEGGKVRVIENAEGSRTTPSIVAYTKDGEVLVGASAKRQAVTNADRTLYAIKRLIGRRFDDNVVQKDIKMVPYKIIKADNGDAWVEVKDKEGKSQKLAPPQISAQVLIKMKKTAEDYLGHEVKDAVITVPAYFNDSQRQATKDAGKIAGLNVKRIINEPTAAALAYGMDKKKGDRKIAVYDLGGGTFDISIIEIAEVDGEHQFEVLATNGDTFLGGEDFDLRLIDYLAGEFKKDEGVDLHNDPLALQRLKEAAEKAKIELSSSQQTDVNLPYITADASGPKHLNIRLTRAKLESLVEDLVERTIEPCKVAIKDAGLKVSEIDDVILVGGQTRMPKVQEAVKNFFGKEARKDVNPDEAVAIGAAIQGAVLSGEVKDVLLLDVTPLSLGIETLGGVMTKLIEKNTTIPTKANQVFSTADDNQTAVTVHVLQGEREMASANKSLGRFDLSDIPPAPRGVPQIEVTFDIDANGILHVSAKDKATGKEQSIVIKASSGLSDEEVEKMVKDAEAHRDSDRKFHELVDARNQADAMIHAAEKSVKDLGSEVSADEKSAIEKVVNELKEAMKGNDKDAIEAKRKALTEHSSKLAERVYAKKGGAAGAPPGGEAEGEPQAQAGGKKEDVVDAEFEEVKDEKKKDEDK</sequence>
<feature type="chain" id="PRO_1000119694" description="Chaperone protein DnaK">
    <location>
        <begin position="1"/>
        <end position="656"/>
    </location>
</feature>
<feature type="region of interest" description="Disordered" evidence="2">
    <location>
        <begin position="602"/>
        <end position="656"/>
    </location>
</feature>
<feature type="compositionally biased region" description="Low complexity" evidence="2">
    <location>
        <begin position="620"/>
        <end position="632"/>
    </location>
</feature>
<feature type="compositionally biased region" description="Basic and acidic residues" evidence="2">
    <location>
        <begin position="647"/>
        <end position="656"/>
    </location>
</feature>
<feature type="modified residue" description="Phosphothreonine; by autocatalysis" evidence="1">
    <location>
        <position position="204"/>
    </location>
</feature>
<keyword id="KW-0067">ATP-binding</keyword>
<keyword id="KW-0143">Chaperone</keyword>
<keyword id="KW-0547">Nucleotide-binding</keyword>
<keyword id="KW-0597">Phosphoprotein</keyword>
<keyword id="KW-0346">Stress response</keyword>
<protein>
    <recommendedName>
        <fullName evidence="1">Chaperone protein DnaK</fullName>
    </recommendedName>
    <alternativeName>
        <fullName evidence="1">HSP70</fullName>
    </alternativeName>
    <alternativeName>
        <fullName evidence="1">Heat shock 70 kDa protein</fullName>
    </alternativeName>
    <alternativeName>
        <fullName evidence="1">Heat shock protein 70</fullName>
    </alternativeName>
</protein>
<proteinExistence type="inferred from homology"/>
<reference key="1">
    <citation type="journal article" date="2009" name="Infect. Immun.">
        <title>Comparative genomics reveal extensive transposon-mediated genomic plasticity and diversity among potential effector proteins within the genus Coxiella.</title>
        <authorList>
            <person name="Beare P.A."/>
            <person name="Unsworth N."/>
            <person name="Andoh M."/>
            <person name="Voth D.E."/>
            <person name="Omsland A."/>
            <person name="Gilk S.D."/>
            <person name="Williams K.P."/>
            <person name="Sobral B.W."/>
            <person name="Kupko J.J. III"/>
            <person name="Porcella S.F."/>
            <person name="Samuel J.E."/>
            <person name="Heinzen R.A."/>
        </authorList>
    </citation>
    <scope>NUCLEOTIDE SEQUENCE [LARGE SCALE GENOMIC DNA]</scope>
    <source>
        <strain>CbuG_Q212</strain>
    </source>
</reference>
<accession>B6IZJ0</accession>
<comment type="function">
    <text evidence="1">Acts as a chaperone.</text>
</comment>
<comment type="induction">
    <text evidence="1">By stress conditions e.g. heat shock.</text>
</comment>
<comment type="similarity">
    <text evidence="1">Belongs to the heat shock protein 70 family.</text>
</comment>
<dbReference type="EMBL" id="CP001019">
    <property type="protein sequence ID" value="ACJ18118.1"/>
    <property type="molecule type" value="Genomic_DNA"/>
</dbReference>
<dbReference type="RefSeq" id="WP_012569898.1">
    <property type="nucleotide sequence ID" value="NC_011527.1"/>
</dbReference>
<dbReference type="SMR" id="B6IZJ0"/>
<dbReference type="KEGG" id="cbg:CbuG_0718"/>
<dbReference type="HOGENOM" id="CLU_005965_2_1_6"/>
<dbReference type="GO" id="GO:0005524">
    <property type="term" value="F:ATP binding"/>
    <property type="evidence" value="ECO:0007669"/>
    <property type="project" value="UniProtKB-UniRule"/>
</dbReference>
<dbReference type="GO" id="GO:0140662">
    <property type="term" value="F:ATP-dependent protein folding chaperone"/>
    <property type="evidence" value="ECO:0007669"/>
    <property type="project" value="InterPro"/>
</dbReference>
<dbReference type="GO" id="GO:0051082">
    <property type="term" value="F:unfolded protein binding"/>
    <property type="evidence" value="ECO:0007669"/>
    <property type="project" value="InterPro"/>
</dbReference>
<dbReference type="CDD" id="cd10234">
    <property type="entry name" value="ASKHA_NBD_HSP70_DnaK-like"/>
    <property type="match status" value="1"/>
</dbReference>
<dbReference type="FunFam" id="2.60.34.10:FF:000014">
    <property type="entry name" value="Chaperone protein DnaK HSP70"/>
    <property type="match status" value="1"/>
</dbReference>
<dbReference type="FunFam" id="1.20.1270.10:FF:000001">
    <property type="entry name" value="Molecular chaperone DnaK"/>
    <property type="match status" value="1"/>
</dbReference>
<dbReference type="FunFam" id="3.30.420.40:FF:000004">
    <property type="entry name" value="Molecular chaperone DnaK"/>
    <property type="match status" value="1"/>
</dbReference>
<dbReference type="FunFam" id="3.90.640.10:FF:000003">
    <property type="entry name" value="Molecular chaperone DnaK"/>
    <property type="match status" value="1"/>
</dbReference>
<dbReference type="Gene3D" id="1.20.1270.10">
    <property type="match status" value="1"/>
</dbReference>
<dbReference type="Gene3D" id="3.30.420.40">
    <property type="match status" value="2"/>
</dbReference>
<dbReference type="Gene3D" id="3.90.640.10">
    <property type="entry name" value="Actin, Chain A, domain 4"/>
    <property type="match status" value="1"/>
</dbReference>
<dbReference type="Gene3D" id="2.60.34.10">
    <property type="entry name" value="Substrate Binding Domain Of DNAk, Chain A, domain 1"/>
    <property type="match status" value="1"/>
</dbReference>
<dbReference type="HAMAP" id="MF_00332">
    <property type="entry name" value="DnaK"/>
    <property type="match status" value="1"/>
</dbReference>
<dbReference type="InterPro" id="IPR043129">
    <property type="entry name" value="ATPase_NBD"/>
</dbReference>
<dbReference type="InterPro" id="IPR012725">
    <property type="entry name" value="Chaperone_DnaK"/>
</dbReference>
<dbReference type="InterPro" id="IPR018181">
    <property type="entry name" value="Heat_shock_70_CS"/>
</dbReference>
<dbReference type="InterPro" id="IPR029048">
    <property type="entry name" value="HSP70_C_sf"/>
</dbReference>
<dbReference type="InterPro" id="IPR029047">
    <property type="entry name" value="HSP70_peptide-bd_sf"/>
</dbReference>
<dbReference type="InterPro" id="IPR013126">
    <property type="entry name" value="Hsp_70_fam"/>
</dbReference>
<dbReference type="NCBIfam" id="NF001413">
    <property type="entry name" value="PRK00290.1"/>
    <property type="match status" value="1"/>
</dbReference>
<dbReference type="NCBIfam" id="NF003520">
    <property type="entry name" value="PRK05183.1"/>
    <property type="match status" value="1"/>
</dbReference>
<dbReference type="NCBIfam" id="TIGR02350">
    <property type="entry name" value="prok_dnaK"/>
    <property type="match status" value="1"/>
</dbReference>
<dbReference type="PANTHER" id="PTHR19375">
    <property type="entry name" value="HEAT SHOCK PROTEIN 70KDA"/>
    <property type="match status" value="1"/>
</dbReference>
<dbReference type="Pfam" id="PF00012">
    <property type="entry name" value="HSP70"/>
    <property type="match status" value="1"/>
</dbReference>
<dbReference type="PRINTS" id="PR00301">
    <property type="entry name" value="HEATSHOCK70"/>
</dbReference>
<dbReference type="SUPFAM" id="SSF53067">
    <property type="entry name" value="Actin-like ATPase domain"/>
    <property type="match status" value="2"/>
</dbReference>
<dbReference type="SUPFAM" id="SSF100934">
    <property type="entry name" value="Heat shock protein 70kD (HSP70), C-terminal subdomain"/>
    <property type="match status" value="1"/>
</dbReference>
<dbReference type="SUPFAM" id="SSF100920">
    <property type="entry name" value="Heat shock protein 70kD (HSP70), peptide-binding domain"/>
    <property type="match status" value="1"/>
</dbReference>
<dbReference type="PROSITE" id="PS00297">
    <property type="entry name" value="HSP70_1"/>
    <property type="match status" value="1"/>
</dbReference>
<dbReference type="PROSITE" id="PS00329">
    <property type="entry name" value="HSP70_2"/>
    <property type="match status" value="1"/>
</dbReference>
<dbReference type="PROSITE" id="PS01036">
    <property type="entry name" value="HSP70_3"/>
    <property type="match status" value="1"/>
</dbReference>
<evidence type="ECO:0000255" key="1">
    <source>
        <dbReference type="HAMAP-Rule" id="MF_00332"/>
    </source>
</evidence>
<evidence type="ECO:0000256" key="2">
    <source>
        <dbReference type="SAM" id="MobiDB-lite"/>
    </source>
</evidence>
<name>DNAK_COXB2</name>
<gene>
    <name evidence="1" type="primary">dnaK</name>
    <name type="ordered locus">CbuG_0718</name>
</gene>
<organism>
    <name type="scientific">Coxiella burnetii (strain CbuG_Q212)</name>
    <name type="common">Coxiella burnetii (strain Q212)</name>
    <dbReference type="NCBI Taxonomy" id="434923"/>
    <lineage>
        <taxon>Bacteria</taxon>
        <taxon>Pseudomonadati</taxon>
        <taxon>Pseudomonadota</taxon>
        <taxon>Gammaproteobacteria</taxon>
        <taxon>Legionellales</taxon>
        <taxon>Coxiellaceae</taxon>
        <taxon>Coxiella</taxon>
    </lineage>
</organism>